<sequence>MNILLANPRGFCAGVDRAISIVELALEIHGAPIYVRHEVVHNRFVVDGLKAKGAVFVEELDEVPDGAIVIFSAHGVSQEVRQEAKRRDLKVFDATCPLVTKVHMQVARASKKGTKAILIGHEGHPEVIGTMGQYDNQDAGIFLVESVEDIAKLPVSSQDDLTFMTQTTLSIDDTSDVIEALKEKYPAIQGPRKNDICYATTNRQQAVRELAKQSQLVLVVGSKNSSNSNRLAELASRMGVPSKLIDGPQDIDPSWLDGVETIGITAGASAPEVLVQSVVEHLKTLGVTGVSNLEGCEENMVFEVPKELRIHEVK</sequence>
<gene>
    <name evidence="1" type="primary">ispH</name>
    <name type="ordered locus">APJL_1546</name>
</gene>
<organism>
    <name type="scientific">Actinobacillus pleuropneumoniae serotype 3 (strain JL03)</name>
    <dbReference type="NCBI Taxonomy" id="434271"/>
    <lineage>
        <taxon>Bacteria</taxon>
        <taxon>Pseudomonadati</taxon>
        <taxon>Pseudomonadota</taxon>
        <taxon>Gammaproteobacteria</taxon>
        <taxon>Pasteurellales</taxon>
        <taxon>Pasteurellaceae</taxon>
        <taxon>Actinobacillus</taxon>
    </lineage>
</organism>
<accession>B0BRB3</accession>
<name>ISPH_ACTPJ</name>
<comment type="function">
    <text evidence="1">Catalyzes the conversion of 1-hydroxy-2-methyl-2-(E)-butenyl 4-diphosphate (HMBPP) into a mixture of isopentenyl diphosphate (IPP) and dimethylallyl diphosphate (DMAPP). Acts in the terminal step of the DOXP/MEP pathway for isoprenoid precursor biosynthesis.</text>
</comment>
<comment type="catalytic activity">
    <reaction evidence="1">
        <text>isopentenyl diphosphate + 2 oxidized [2Fe-2S]-[ferredoxin] + H2O = (2E)-4-hydroxy-3-methylbut-2-enyl diphosphate + 2 reduced [2Fe-2S]-[ferredoxin] + 2 H(+)</text>
        <dbReference type="Rhea" id="RHEA:24488"/>
        <dbReference type="Rhea" id="RHEA-COMP:10000"/>
        <dbReference type="Rhea" id="RHEA-COMP:10001"/>
        <dbReference type="ChEBI" id="CHEBI:15377"/>
        <dbReference type="ChEBI" id="CHEBI:15378"/>
        <dbReference type="ChEBI" id="CHEBI:33737"/>
        <dbReference type="ChEBI" id="CHEBI:33738"/>
        <dbReference type="ChEBI" id="CHEBI:128753"/>
        <dbReference type="ChEBI" id="CHEBI:128769"/>
        <dbReference type="EC" id="1.17.7.4"/>
    </reaction>
</comment>
<comment type="catalytic activity">
    <reaction evidence="1">
        <text>dimethylallyl diphosphate + 2 oxidized [2Fe-2S]-[ferredoxin] + H2O = (2E)-4-hydroxy-3-methylbut-2-enyl diphosphate + 2 reduced [2Fe-2S]-[ferredoxin] + 2 H(+)</text>
        <dbReference type="Rhea" id="RHEA:24825"/>
        <dbReference type="Rhea" id="RHEA-COMP:10000"/>
        <dbReference type="Rhea" id="RHEA-COMP:10001"/>
        <dbReference type="ChEBI" id="CHEBI:15377"/>
        <dbReference type="ChEBI" id="CHEBI:15378"/>
        <dbReference type="ChEBI" id="CHEBI:33737"/>
        <dbReference type="ChEBI" id="CHEBI:33738"/>
        <dbReference type="ChEBI" id="CHEBI:57623"/>
        <dbReference type="ChEBI" id="CHEBI:128753"/>
        <dbReference type="EC" id="1.17.7.4"/>
    </reaction>
</comment>
<comment type="cofactor">
    <cofactor evidence="1">
        <name>[4Fe-4S] cluster</name>
        <dbReference type="ChEBI" id="CHEBI:49883"/>
    </cofactor>
    <text evidence="1">Binds 1 [4Fe-4S] cluster per subunit.</text>
</comment>
<comment type="pathway">
    <text evidence="1">Isoprenoid biosynthesis; dimethylallyl diphosphate biosynthesis; dimethylallyl diphosphate from (2E)-4-hydroxy-3-methylbutenyl diphosphate: step 1/1.</text>
</comment>
<comment type="pathway">
    <text evidence="1">Isoprenoid biosynthesis; isopentenyl diphosphate biosynthesis via DXP pathway; isopentenyl diphosphate from 1-deoxy-D-xylulose 5-phosphate: step 6/6.</text>
</comment>
<comment type="similarity">
    <text evidence="1">Belongs to the IspH family.</text>
</comment>
<protein>
    <recommendedName>
        <fullName evidence="1">4-hydroxy-3-methylbut-2-enyl diphosphate reductase</fullName>
        <shortName evidence="1">HMBPP reductase</shortName>
        <ecNumber evidence="1">1.17.7.4</ecNumber>
    </recommendedName>
</protein>
<proteinExistence type="inferred from homology"/>
<reference key="1">
    <citation type="journal article" date="2008" name="PLoS ONE">
        <title>Genome biology of Actinobacillus pleuropneumoniae JL03, an isolate of serotype 3 prevalent in China.</title>
        <authorList>
            <person name="Xu Z."/>
            <person name="Zhou Y."/>
            <person name="Li L."/>
            <person name="Zhou R."/>
            <person name="Xiao S."/>
            <person name="Wan Y."/>
            <person name="Zhang S."/>
            <person name="Wang K."/>
            <person name="Li W."/>
            <person name="Li L."/>
            <person name="Jin H."/>
            <person name="Kang M."/>
            <person name="Dalai B."/>
            <person name="Li T."/>
            <person name="Liu L."/>
            <person name="Cheng Y."/>
            <person name="Zhang L."/>
            <person name="Xu T."/>
            <person name="Zheng H."/>
            <person name="Pu S."/>
            <person name="Wang B."/>
            <person name="Gu W."/>
            <person name="Zhang X.L."/>
            <person name="Zhu G.-F."/>
            <person name="Wang S."/>
            <person name="Zhao G.-P."/>
            <person name="Chen H."/>
        </authorList>
    </citation>
    <scope>NUCLEOTIDE SEQUENCE [LARGE SCALE GENOMIC DNA]</scope>
    <source>
        <strain>JL03</strain>
    </source>
</reference>
<feature type="chain" id="PRO_1000098929" description="4-hydroxy-3-methylbut-2-enyl diphosphate reductase">
    <location>
        <begin position="1"/>
        <end position="314"/>
    </location>
</feature>
<feature type="active site" description="Proton donor" evidence="1">
    <location>
        <position position="126"/>
    </location>
</feature>
<feature type="binding site" evidence="1">
    <location>
        <position position="12"/>
    </location>
    <ligand>
        <name>[4Fe-4S] cluster</name>
        <dbReference type="ChEBI" id="CHEBI:49883"/>
    </ligand>
</feature>
<feature type="binding site" evidence="1">
    <location>
        <position position="41"/>
    </location>
    <ligand>
        <name>(2E)-4-hydroxy-3-methylbut-2-enyl diphosphate</name>
        <dbReference type="ChEBI" id="CHEBI:128753"/>
    </ligand>
</feature>
<feature type="binding site" evidence="1">
    <location>
        <position position="41"/>
    </location>
    <ligand>
        <name>dimethylallyl diphosphate</name>
        <dbReference type="ChEBI" id="CHEBI:57623"/>
    </ligand>
</feature>
<feature type="binding site" evidence="1">
    <location>
        <position position="41"/>
    </location>
    <ligand>
        <name>isopentenyl diphosphate</name>
        <dbReference type="ChEBI" id="CHEBI:128769"/>
    </ligand>
</feature>
<feature type="binding site" evidence="1">
    <location>
        <position position="74"/>
    </location>
    <ligand>
        <name>(2E)-4-hydroxy-3-methylbut-2-enyl diphosphate</name>
        <dbReference type="ChEBI" id="CHEBI:128753"/>
    </ligand>
</feature>
<feature type="binding site" evidence="1">
    <location>
        <position position="74"/>
    </location>
    <ligand>
        <name>dimethylallyl diphosphate</name>
        <dbReference type="ChEBI" id="CHEBI:57623"/>
    </ligand>
</feature>
<feature type="binding site" evidence="1">
    <location>
        <position position="74"/>
    </location>
    <ligand>
        <name>isopentenyl diphosphate</name>
        <dbReference type="ChEBI" id="CHEBI:128769"/>
    </ligand>
</feature>
<feature type="binding site" evidence="1">
    <location>
        <position position="96"/>
    </location>
    <ligand>
        <name>[4Fe-4S] cluster</name>
        <dbReference type="ChEBI" id="CHEBI:49883"/>
    </ligand>
</feature>
<feature type="binding site" evidence="1">
    <location>
        <position position="124"/>
    </location>
    <ligand>
        <name>(2E)-4-hydroxy-3-methylbut-2-enyl diphosphate</name>
        <dbReference type="ChEBI" id="CHEBI:128753"/>
    </ligand>
</feature>
<feature type="binding site" evidence="1">
    <location>
        <position position="124"/>
    </location>
    <ligand>
        <name>dimethylallyl diphosphate</name>
        <dbReference type="ChEBI" id="CHEBI:57623"/>
    </ligand>
</feature>
<feature type="binding site" evidence="1">
    <location>
        <position position="124"/>
    </location>
    <ligand>
        <name>isopentenyl diphosphate</name>
        <dbReference type="ChEBI" id="CHEBI:128769"/>
    </ligand>
</feature>
<feature type="binding site" evidence="1">
    <location>
        <position position="167"/>
    </location>
    <ligand>
        <name>(2E)-4-hydroxy-3-methylbut-2-enyl diphosphate</name>
        <dbReference type="ChEBI" id="CHEBI:128753"/>
    </ligand>
</feature>
<feature type="binding site" evidence="1">
    <location>
        <position position="197"/>
    </location>
    <ligand>
        <name>[4Fe-4S] cluster</name>
        <dbReference type="ChEBI" id="CHEBI:49883"/>
    </ligand>
</feature>
<feature type="binding site" evidence="1">
    <location>
        <position position="225"/>
    </location>
    <ligand>
        <name>(2E)-4-hydroxy-3-methylbut-2-enyl diphosphate</name>
        <dbReference type="ChEBI" id="CHEBI:128753"/>
    </ligand>
</feature>
<feature type="binding site" evidence="1">
    <location>
        <position position="225"/>
    </location>
    <ligand>
        <name>dimethylallyl diphosphate</name>
        <dbReference type="ChEBI" id="CHEBI:57623"/>
    </ligand>
</feature>
<feature type="binding site" evidence="1">
    <location>
        <position position="225"/>
    </location>
    <ligand>
        <name>isopentenyl diphosphate</name>
        <dbReference type="ChEBI" id="CHEBI:128769"/>
    </ligand>
</feature>
<feature type="binding site" evidence="1">
    <location>
        <position position="226"/>
    </location>
    <ligand>
        <name>(2E)-4-hydroxy-3-methylbut-2-enyl diphosphate</name>
        <dbReference type="ChEBI" id="CHEBI:128753"/>
    </ligand>
</feature>
<feature type="binding site" evidence="1">
    <location>
        <position position="226"/>
    </location>
    <ligand>
        <name>dimethylallyl diphosphate</name>
        <dbReference type="ChEBI" id="CHEBI:57623"/>
    </ligand>
</feature>
<feature type="binding site" evidence="1">
    <location>
        <position position="226"/>
    </location>
    <ligand>
        <name>isopentenyl diphosphate</name>
        <dbReference type="ChEBI" id="CHEBI:128769"/>
    </ligand>
</feature>
<feature type="binding site" evidence="1">
    <location>
        <position position="227"/>
    </location>
    <ligand>
        <name>(2E)-4-hydroxy-3-methylbut-2-enyl diphosphate</name>
        <dbReference type="ChEBI" id="CHEBI:128753"/>
    </ligand>
</feature>
<feature type="binding site" evidence="1">
    <location>
        <position position="227"/>
    </location>
    <ligand>
        <name>dimethylallyl diphosphate</name>
        <dbReference type="ChEBI" id="CHEBI:57623"/>
    </ligand>
</feature>
<feature type="binding site" evidence="1">
    <location>
        <position position="227"/>
    </location>
    <ligand>
        <name>isopentenyl diphosphate</name>
        <dbReference type="ChEBI" id="CHEBI:128769"/>
    </ligand>
</feature>
<feature type="binding site" evidence="1">
    <location>
        <position position="269"/>
    </location>
    <ligand>
        <name>(2E)-4-hydroxy-3-methylbut-2-enyl diphosphate</name>
        <dbReference type="ChEBI" id="CHEBI:128753"/>
    </ligand>
</feature>
<feature type="binding site" evidence="1">
    <location>
        <position position="269"/>
    </location>
    <ligand>
        <name>dimethylallyl diphosphate</name>
        <dbReference type="ChEBI" id="CHEBI:57623"/>
    </ligand>
</feature>
<feature type="binding site" evidence="1">
    <location>
        <position position="269"/>
    </location>
    <ligand>
        <name>isopentenyl diphosphate</name>
        <dbReference type="ChEBI" id="CHEBI:128769"/>
    </ligand>
</feature>
<dbReference type="EC" id="1.17.7.4" evidence="1"/>
<dbReference type="EMBL" id="CP000687">
    <property type="protein sequence ID" value="ABY70098.1"/>
    <property type="molecule type" value="Genomic_DNA"/>
</dbReference>
<dbReference type="RefSeq" id="WP_012263266.1">
    <property type="nucleotide sequence ID" value="NC_010278.1"/>
</dbReference>
<dbReference type="SMR" id="B0BRB3"/>
<dbReference type="KEGG" id="apj:APJL_1546"/>
<dbReference type="HOGENOM" id="CLU_027486_1_0_6"/>
<dbReference type="UniPathway" id="UPA00056">
    <property type="reaction ID" value="UER00097"/>
</dbReference>
<dbReference type="UniPathway" id="UPA00059">
    <property type="reaction ID" value="UER00105"/>
</dbReference>
<dbReference type="Proteomes" id="UP000008547">
    <property type="component" value="Chromosome"/>
</dbReference>
<dbReference type="GO" id="GO:0051539">
    <property type="term" value="F:4 iron, 4 sulfur cluster binding"/>
    <property type="evidence" value="ECO:0007669"/>
    <property type="project" value="UniProtKB-UniRule"/>
</dbReference>
<dbReference type="GO" id="GO:0051745">
    <property type="term" value="F:4-hydroxy-3-methylbut-2-enyl diphosphate reductase activity"/>
    <property type="evidence" value="ECO:0007669"/>
    <property type="project" value="UniProtKB-UniRule"/>
</dbReference>
<dbReference type="GO" id="GO:0046872">
    <property type="term" value="F:metal ion binding"/>
    <property type="evidence" value="ECO:0007669"/>
    <property type="project" value="UniProtKB-KW"/>
</dbReference>
<dbReference type="GO" id="GO:0050992">
    <property type="term" value="P:dimethylallyl diphosphate biosynthetic process"/>
    <property type="evidence" value="ECO:0007669"/>
    <property type="project" value="UniProtKB-UniRule"/>
</dbReference>
<dbReference type="GO" id="GO:0019288">
    <property type="term" value="P:isopentenyl diphosphate biosynthetic process, methylerythritol 4-phosphate pathway"/>
    <property type="evidence" value="ECO:0007669"/>
    <property type="project" value="UniProtKB-UniRule"/>
</dbReference>
<dbReference type="GO" id="GO:0016114">
    <property type="term" value="P:terpenoid biosynthetic process"/>
    <property type="evidence" value="ECO:0007669"/>
    <property type="project" value="UniProtKB-UniRule"/>
</dbReference>
<dbReference type="CDD" id="cd13944">
    <property type="entry name" value="lytB_ispH"/>
    <property type="match status" value="1"/>
</dbReference>
<dbReference type="Gene3D" id="3.40.50.11270">
    <property type="match status" value="1"/>
</dbReference>
<dbReference type="Gene3D" id="3.40.1010.20">
    <property type="entry name" value="4-hydroxy-3-methylbut-2-enyl diphosphate reductase, catalytic domain"/>
    <property type="match status" value="2"/>
</dbReference>
<dbReference type="HAMAP" id="MF_00191">
    <property type="entry name" value="IspH"/>
    <property type="match status" value="1"/>
</dbReference>
<dbReference type="InterPro" id="IPR003451">
    <property type="entry name" value="LytB/IspH"/>
</dbReference>
<dbReference type="NCBIfam" id="TIGR00216">
    <property type="entry name" value="ispH_lytB"/>
    <property type="match status" value="1"/>
</dbReference>
<dbReference type="NCBIfam" id="NF002188">
    <property type="entry name" value="PRK01045.1-2"/>
    <property type="match status" value="1"/>
</dbReference>
<dbReference type="NCBIfam" id="NF002190">
    <property type="entry name" value="PRK01045.1-4"/>
    <property type="match status" value="1"/>
</dbReference>
<dbReference type="PANTHER" id="PTHR30426">
    <property type="entry name" value="4-HYDROXY-3-METHYLBUT-2-ENYL DIPHOSPHATE REDUCTASE"/>
    <property type="match status" value="1"/>
</dbReference>
<dbReference type="PANTHER" id="PTHR30426:SF0">
    <property type="entry name" value="4-HYDROXY-3-METHYLBUT-2-ENYL DIPHOSPHATE REDUCTASE"/>
    <property type="match status" value="1"/>
</dbReference>
<dbReference type="Pfam" id="PF02401">
    <property type="entry name" value="LYTB"/>
    <property type="match status" value="1"/>
</dbReference>
<evidence type="ECO:0000255" key="1">
    <source>
        <dbReference type="HAMAP-Rule" id="MF_00191"/>
    </source>
</evidence>
<keyword id="KW-0004">4Fe-4S</keyword>
<keyword id="KW-0408">Iron</keyword>
<keyword id="KW-0411">Iron-sulfur</keyword>
<keyword id="KW-0414">Isoprene biosynthesis</keyword>
<keyword id="KW-0479">Metal-binding</keyword>
<keyword id="KW-0560">Oxidoreductase</keyword>